<accession>B7GL41</accession>
<reference key="1">
    <citation type="journal article" date="2008" name="Genome Biol.">
        <title>Encapsulated in silica: genome, proteome and physiology of the thermophilic bacterium Anoxybacillus flavithermus WK1.</title>
        <authorList>
            <person name="Saw J.H."/>
            <person name="Mountain B.W."/>
            <person name="Feng L."/>
            <person name="Omelchenko M.V."/>
            <person name="Hou S."/>
            <person name="Saito J.A."/>
            <person name="Stott M.B."/>
            <person name="Li D."/>
            <person name="Zhao G."/>
            <person name="Wu J."/>
            <person name="Galperin M.Y."/>
            <person name="Koonin E.V."/>
            <person name="Makarova K.S."/>
            <person name="Wolf Y.I."/>
            <person name="Rigden D.J."/>
            <person name="Dunfield P.F."/>
            <person name="Wang L."/>
            <person name="Alam M."/>
        </authorList>
    </citation>
    <scope>NUCLEOTIDE SEQUENCE [LARGE SCALE GENOMIC DNA]</scope>
    <source>
        <strain>DSM 21510 / WK1</strain>
    </source>
</reference>
<protein>
    <recommendedName>
        <fullName evidence="1">ATP phosphoribosyltransferase</fullName>
        <shortName evidence="1">ATP-PRT</shortName>
        <shortName evidence="1">ATP-PRTase</shortName>
        <ecNumber evidence="1">2.4.2.17</ecNumber>
    </recommendedName>
</protein>
<dbReference type="EC" id="2.4.2.17" evidence="1"/>
<dbReference type="EMBL" id="CP000922">
    <property type="protein sequence ID" value="ACJ34891.1"/>
    <property type="molecule type" value="Genomic_DNA"/>
</dbReference>
<dbReference type="RefSeq" id="WP_012576030.1">
    <property type="nucleotide sequence ID" value="NC_011567.1"/>
</dbReference>
<dbReference type="SMR" id="B7GL41"/>
<dbReference type="STRING" id="491915.Aflv_2536"/>
<dbReference type="GeneID" id="7038810"/>
<dbReference type="KEGG" id="afl:Aflv_2536"/>
<dbReference type="PATRIC" id="fig|491915.6.peg.2613"/>
<dbReference type="eggNOG" id="COG0040">
    <property type="taxonomic scope" value="Bacteria"/>
</dbReference>
<dbReference type="HOGENOM" id="CLU_038115_2_0_9"/>
<dbReference type="UniPathway" id="UPA00031">
    <property type="reaction ID" value="UER00006"/>
</dbReference>
<dbReference type="Proteomes" id="UP000000742">
    <property type="component" value="Chromosome"/>
</dbReference>
<dbReference type="GO" id="GO:0005737">
    <property type="term" value="C:cytoplasm"/>
    <property type="evidence" value="ECO:0007669"/>
    <property type="project" value="UniProtKB-SubCell"/>
</dbReference>
<dbReference type="GO" id="GO:0005524">
    <property type="term" value="F:ATP binding"/>
    <property type="evidence" value="ECO:0007669"/>
    <property type="project" value="UniProtKB-KW"/>
</dbReference>
<dbReference type="GO" id="GO:0003879">
    <property type="term" value="F:ATP phosphoribosyltransferase activity"/>
    <property type="evidence" value="ECO:0007669"/>
    <property type="project" value="UniProtKB-UniRule"/>
</dbReference>
<dbReference type="GO" id="GO:0000105">
    <property type="term" value="P:L-histidine biosynthetic process"/>
    <property type="evidence" value="ECO:0007669"/>
    <property type="project" value="UniProtKB-UniRule"/>
</dbReference>
<dbReference type="CDD" id="cd13595">
    <property type="entry name" value="PBP2_HisGs"/>
    <property type="match status" value="1"/>
</dbReference>
<dbReference type="FunFam" id="3.40.190.10:FF:000008">
    <property type="entry name" value="ATP phosphoribosyltransferase"/>
    <property type="match status" value="1"/>
</dbReference>
<dbReference type="FunFam" id="3.40.190.10:FF:000011">
    <property type="entry name" value="ATP phosphoribosyltransferase"/>
    <property type="match status" value="1"/>
</dbReference>
<dbReference type="Gene3D" id="3.40.190.10">
    <property type="entry name" value="Periplasmic binding protein-like II"/>
    <property type="match status" value="2"/>
</dbReference>
<dbReference type="HAMAP" id="MF_01018">
    <property type="entry name" value="HisG_Short"/>
    <property type="match status" value="1"/>
</dbReference>
<dbReference type="InterPro" id="IPR013820">
    <property type="entry name" value="ATP_PRibTrfase_cat"/>
</dbReference>
<dbReference type="InterPro" id="IPR018198">
    <property type="entry name" value="ATP_PRibTrfase_CS"/>
</dbReference>
<dbReference type="InterPro" id="IPR001348">
    <property type="entry name" value="ATP_PRibTrfase_HisG"/>
</dbReference>
<dbReference type="InterPro" id="IPR024893">
    <property type="entry name" value="ATP_PRibTrfase_HisG_short"/>
</dbReference>
<dbReference type="NCBIfam" id="TIGR00070">
    <property type="entry name" value="hisG"/>
    <property type="match status" value="1"/>
</dbReference>
<dbReference type="PANTHER" id="PTHR21403:SF8">
    <property type="entry name" value="ATP PHOSPHORIBOSYLTRANSFERASE"/>
    <property type="match status" value="1"/>
</dbReference>
<dbReference type="PANTHER" id="PTHR21403">
    <property type="entry name" value="ATP PHOSPHORIBOSYLTRANSFERASE ATP-PRTASE"/>
    <property type="match status" value="1"/>
</dbReference>
<dbReference type="Pfam" id="PF01634">
    <property type="entry name" value="HisG"/>
    <property type="match status" value="1"/>
</dbReference>
<dbReference type="SUPFAM" id="SSF53850">
    <property type="entry name" value="Periplasmic binding protein-like II"/>
    <property type="match status" value="1"/>
</dbReference>
<dbReference type="PROSITE" id="PS01316">
    <property type="entry name" value="ATP_P_PHORIBOSYLTR"/>
    <property type="match status" value="1"/>
</dbReference>
<evidence type="ECO:0000255" key="1">
    <source>
        <dbReference type="HAMAP-Rule" id="MF_01018"/>
    </source>
</evidence>
<feature type="chain" id="PRO_1000135265" description="ATP phosphoribosyltransferase">
    <location>
        <begin position="1"/>
        <end position="213"/>
    </location>
</feature>
<organism>
    <name type="scientific">Anoxybacillus flavithermus (strain DSM 21510 / WK1)</name>
    <dbReference type="NCBI Taxonomy" id="491915"/>
    <lineage>
        <taxon>Bacteria</taxon>
        <taxon>Bacillati</taxon>
        <taxon>Bacillota</taxon>
        <taxon>Bacilli</taxon>
        <taxon>Bacillales</taxon>
        <taxon>Anoxybacillaceae</taxon>
        <taxon>Anoxybacillus</taxon>
    </lineage>
</organism>
<gene>
    <name evidence="1" type="primary">hisG</name>
    <name type="ordered locus">Aflv_2536</name>
</gene>
<proteinExistence type="inferred from homology"/>
<keyword id="KW-0028">Amino-acid biosynthesis</keyword>
<keyword id="KW-0067">ATP-binding</keyword>
<keyword id="KW-0963">Cytoplasm</keyword>
<keyword id="KW-0328">Glycosyltransferase</keyword>
<keyword id="KW-0368">Histidine biosynthesis</keyword>
<keyword id="KW-0547">Nucleotide-binding</keyword>
<keyword id="KW-0808">Transferase</keyword>
<name>HIS1_ANOFW</name>
<sequence>MLTVAMPKGRIFSEALALLKQAGYDIPDDLEHSRKLMIDVPSEQLRFILAKPMDVVTYVEHGVADVGIAGKDVLLEEERDVYEMLDLRISPCYLAVAGLPNTHVHPIAPRVATKYPNIASTYFREQGEQVEIIKLNGSVELAPLIGLAERIVDIVSTGRTLKENGLVELERIVDVTSRFIVNPVSYRMQDRAIERMVDRLTYAIEKVGENDEN</sequence>
<comment type="function">
    <text evidence="1">Catalyzes the condensation of ATP and 5-phosphoribose 1-diphosphate to form N'-(5'-phosphoribosyl)-ATP (PR-ATP). Has a crucial role in the pathway because the rate of histidine biosynthesis seems to be controlled primarily by regulation of HisG enzymatic activity.</text>
</comment>
<comment type="catalytic activity">
    <reaction evidence="1">
        <text>1-(5-phospho-beta-D-ribosyl)-ATP + diphosphate = 5-phospho-alpha-D-ribose 1-diphosphate + ATP</text>
        <dbReference type="Rhea" id="RHEA:18473"/>
        <dbReference type="ChEBI" id="CHEBI:30616"/>
        <dbReference type="ChEBI" id="CHEBI:33019"/>
        <dbReference type="ChEBI" id="CHEBI:58017"/>
        <dbReference type="ChEBI" id="CHEBI:73183"/>
        <dbReference type="EC" id="2.4.2.17"/>
    </reaction>
</comment>
<comment type="pathway">
    <text evidence="1">Amino-acid biosynthesis; L-histidine biosynthesis; L-histidine from 5-phospho-alpha-D-ribose 1-diphosphate: step 1/9.</text>
</comment>
<comment type="subunit">
    <text evidence="1">Heteromultimer composed of HisG and HisZ subunits.</text>
</comment>
<comment type="subcellular location">
    <subcellularLocation>
        <location evidence="1">Cytoplasm</location>
    </subcellularLocation>
</comment>
<comment type="domain">
    <text>Lacks the C-terminal regulatory region which is replaced by HisZ.</text>
</comment>
<comment type="similarity">
    <text evidence="1">Belongs to the ATP phosphoribosyltransferase family. Short subfamily.</text>
</comment>